<sequence length="739" mass="79127">MLLTTEPTATQIRDERIYATMGLSDDEYALVVSLLGREPNYTEIGLFSVMWSEHCSYKNSKPVLRKFPTTGKHVLQGPGEGAGIVDIGDGQAVAFKIESHNHPSAIEPYQGAATGVGGIIRDIFSMGARPIALLNSLRFGDLNESRVKHLFGHVVSGIAGYGNCVGIPTVGGEVAFDPAYSGNPLVNAMCVGFIRHEDIQKGIAEGVGNSVMYVGATTGRDGIHGATFASEELGEDADEKRPAVQVGDPFMEKLLIEACLEVIKHPALVGIQDMGAAGLTSSSAEMASKAGMGIEMNLDLVPQRETGMTPYEMMLSESQERMLLVVKAGHEDEIEAIVTKWGLHAIKVGEVIEEKVLRLVHQGEVAAEVPVDALAEDAPVYHKPSKVPAYYEAFQAMEPVTPIVEDMMATWKDVLAMPSIASKRWVYEQYDHMVQTSTVVAPGSDAAVIRIRETEKSLAMTTDCNAKYVYLDPRVGGAIAVAEAARNIVASGAEPLALTDCLNFGSPDKPEGFWQLDQAVEGMAEACRTLDTPVIGGNVSLYNESNGQAIYPTPVVGMVGLIEKPEHITTSFAKQAGDVVFLLGETKAEFGGSALQMLQDGKVSGHAPTLDLENERQTQKVLLHAIREGLVTAAHDVSEGGLAAALPELVFGTGFGVDVTIDTDLVTALFSESQSRFLVTVDKAHAEAFARMTNGTAIGTVTEASTLVVRASDRLIEMDVQELERVWEGAIPCYMTSEA</sequence>
<protein>
    <recommendedName>
        <fullName evidence="1">Phosphoribosylformylglycinamidine synthase subunit PurL</fullName>
        <shortName evidence="1">FGAM synthase</shortName>
        <ecNumber evidence="1">6.3.5.3</ecNumber>
    </recommendedName>
    <alternativeName>
        <fullName evidence="1">Formylglycinamide ribonucleotide amidotransferase subunit II</fullName>
        <shortName evidence="1">FGAR amidotransferase II</shortName>
        <shortName evidence="1">FGAR-AT II</shortName>
    </alternativeName>
    <alternativeName>
        <fullName evidence="1">Glutamine amidotransferase PurL</fullName>
    </alternativeName>
    <alternativeName>
        <fullName evidence="1">Phosphoribosylformylglycinamidine synthase subunit II</fullName>
    </alternativeName>
</protein>
<proteinExistence type="inferred from homology"/>
<feature type="chain" id="PRO_1000206039" description="Phosphoribosylformylglycinamidine synthase subunit PurL">
    <location>
        <begin position="1"/>
        <end position="739"/>
    </location>
</feature>
<feature type="active site" evidence="1">
    <location>
        <position position="54"/>
    </location>
</feature>
<feature type="active site" description="Proton acceptor" evidence="1">
    <location>
        <position position="100"/>
    </location>
</feature>
<feature type="binding site" evidence="1">
    <location>
        <position position="57"/>
    </location>
    <ligand>
        <name>ATP</name>
        <dbReference type="ChEBI" id="CHEBI:30616"/>
    </ligand>
</feature>
<feature type="binding site" evidence="1">
    <location>
        <position position="96"/>
    </location>
    <ligand>
        <name>ATP</name>
        <dbReference type="ChEBI" id="CHEBI:30616"/>
    </ligand>
</feature>
<feature type="binding site" evidence="1">
    <location>
        <position position="98"/>
    </location>
    <ligand>
        <name>Mg(2+)</name>
        <dbReference type="ChEBI" id="CHEBI:18420"/>
        <label>1</label>
    </ligand>
</feature>
<feature type="binding site" evidence="1">
    <location>
        <begin position="99"/>
        <end position="102"/>
    </location>
    <ligand>
        <name>substrate</name>
    </ligand>
</feature>
<feature type="binding site" evidence="1">
    <location>
        <position position="121"/>
    </location>
    <ligand>
        <name>substrate</name>
    </ligand>
</feature>
<feature type="binding site" evidence="1">
    <location>
        <position position="122"/>
    </location>
    <ligand>
        <name>Mg(2+)</name>
        <dbReference type="ChEBI" id="CHEBI:18420"/>
        <label>2</label>
    </ligand>
</feature>
<feature type="binding site" evidence="1">
    <location>
        <position position="245"/>
    </location>
    <ligand>
        <name>substrate</name>
    </ligand>
</feature>
<feature type="binding site" evidence="1">
    <location>
        <position position="273"/>
    </location>
    <ligand>
        <name>Mg(2+)</name>
        <dbReference type="ChEBI" id="CHEBI:18420"/>
        <label>2</label>
    </ligand>
</feature>
<feature type="binding site" evidence="1">
    <location>
        <begin position="317"/>
        <end position="319"/>
    </location>
    <ligand>
        <name>substrate</name>
    </ligand>
</feature>
<feature type="binding site" evidence="1">
    <location>
        <position position="500"/>
    </location>
    <ligand>
        <name>ATP</name>
        <dbReference type="ChEBI" id="CHEBI:30616"/>
    </ligand>
</feature>
<feature type="binding site" evidence="1">
    <location>
        <position position="537"/>
    </location>
    <ligand>
        <name>ATP</name>
        <dbReference type="ChEBI" id="CHEBI:30616"/>
    </ligand>
</feature>
<feature type="binding site" evidence="1">
    <location>
        <position position="538"/>
    </location>
    <ligand>
        <name>Mg(2+)</name>
        <dbReference type="ChEBI" id="CHEBI:18420"/>
        <label>1</label>
    </ligand>
</feature>
<feature type="binding site" evidence="1">
    <location>
        <position position="540"/>
    </location>
    <ligand>
        <name>substrate</name>
    </ligand>
</feature>
<accession>C4L299</accession>
<keyword id="KW-0067">ATP-binding</keyword>
<keyword id="KW-0963">Cytoplasm</keyword>
<keyword id="KW-0436">Ligase</keyword>
<keyword id="KW-0460">Magnesium</keyword>
<keyword id="KW-0479">Metal-binding</keyword>
<keyword id="KW-0547">Nucleotide-binding</keyword>
<keyword id="KW-0658">Purine biosynthesis</keyword>
<name>PURL_EXISA</name>
<comment type="function">
    <text evidence="1">Part of the phosphoribosylformylglycinamidine synthase complex involved in the purines biosynthetic pathway. Catalyzes the ATP-dependent conversion of formylglycinamide ribonucleotide (FGAR) and glutamine to yield formylglycinamidine ribonucleotide (FGAM) and glutamate. The FGAM synthase complex is composed of three subunits. PurQ produces an ammonia molecule by converting glutamine to glutamate. PurL transfers the ammonia molecule to FGAR to form FGAM in an ATP-dependent manner. PurS interacts with PurQ and PurL and is thought to assist in the transfer of the ammonia molecule from PurQ to PurL.</text>
</comment>
<comment type="catalytic activity">
    <reaction evidence="1">
        <text>N(2)-formyl-N(1)-(5-phospho-beta-D-ribosyl)glycinamide + L-glutamine + ATP + H2O = 2-formamido-N(1)-(5-O-phospho-beta-D-ribosyl)acetamidine + L-glutamate + ADP + phosphate + H(+)</text>
        <dbReference type="Rhea" id="RHEA:17129"/>
        <dbReference type="ChEBI" id="CHEBI:15377"/>
        <dbReference type="ChEBI" id="CHEBI:15378"/>
        <dbReference type="ChEBI" id="CHEBI:29985"/>
        <dbReference type="ChEBI" id="CHEBI:30616"/>
        <dbReference type="ChEBI" id="CHEBI:43474"/>
        <dbReference type="ChEBI" id="CHEBI:58359"/>
        <dbReference type="ChEBI" id="CHEBI:147286"/>
        <dbReference type="ChEBI" id="CHEBI:147287"/>
        <dbReference type="ChEBI" id="CHEBI:456216"/>
        <dbReference type="EC" id="6.3.5.3"/>
    </reaction>
</comment>
<comment type="pathway">
    <text evidence="1">Purine metabolism; IMP biosynthesis via de novo pathway; 5-amino-1-(5-phospho-D-ribosyl)imidazole from N(2)-formyl-N(1)-(5-phospho-D-ribosyl)glycinamide: step 1/2.</text>
</comment>
<comment type="subunit">
    <text evidence="1">Monomer. Part of the FGAM synthase complex composed of 1 PurL, 1 PurQ and 2 PurS subunits.</text>
</comment>
<comment type="subcellular location">
    <subcellularLocation>
        <location evidence="1">Cytoplasm</location>
    </subcellularLocation>
</comment>
<comment type="similarity">
    <text evidence="1">Belongs to the FGAMS family.</text>
</comment>
<gene>
    <name evidence="1" type="primary">purL</name>
    <name type="ordered locus">EAT1b_2229</name>
</gene>
<organism>
    <name type="scientific">Exiguobacterium sp. (strain ATCC BAA-1283 / AT1b)</name>
    <dbReference type="NCBI Taxonomy" id="360911"/>
    <lineage>
        <taxon>Bacteria</taxon>
        <taxon>Bacillati</taxon>
        <taxon>Bacillota</taxon>
        <taxon>Bacilli</taxon>
        <taxon>Bacillales</taxon>
        <taxon>Bacillales Family XII. Incertae Sedis</taxon>
        <taxon>Exiguobacterium</taxon>
    </lineage>
</organism>
<reference key="1">
    <citation type="journal article" date="2011" name="J. Bacteriol.">
        <title>Complete genome sequence of the Thermophilic Bacterium Exiguobacterium sp. AT1b.</title>
        <authorList>
            <person name="Vishnivetskaya T.A."/>
            <person name="Lucas S."/>
            <person name="Copeland A."/>
            <person name="Lapidus A."/>
            <person name="Glavina del Rio T."/>
            <person name="Dalin E."/>
            <person name="Tice H."/>
            <person name="Bruce D.C."/>
            <person name="Goodwin L.A."/>
            <person name="Pitluck S."/>
            <person name="Saunders E."/>
            <person name="Brettin T."/>
            <person name="Detter C."/>
            <person name="Han C."/>
            <person name="Larimer F."/>
            <person name="Land M.L."/>
            <person name="Hauser L.J."/>
            <person name="Kyrpides N.C."/>
            <person name="Ovchinnikova G."/>
            <person name="Kathariou S."/>
            <person name="Ramaley R.F."/>
            <person name="Rodrigues D.F."/>
            <person name="Hendrix C."/>
            <person name="Richardson P."/>
            <person name="Tiedje J.M."/>
        </authorList>
    </citation>
    <scope>NUCLEOTIDE SEQUENCE [LARGE SCALE GENOMIC DNA]</scope>
    <source>
        <strain>ATCC BAA-1283 / AT1b</strain>
    </source>
</reference>
<dbReference type="EC" id="6.3.5.3" evidence="1"/>
<dbReference type="EMBL" id="CP001615">
    <property type="protein sequence ID" value="ACQ71151.1"/>
    <property type="molecule type" value="Genomic_DNA"/>
</dbReference>
<dbReference type="RefSeq" id="WP_015880710.1">
    <property type="nucleotide sequence ID" value="NC_012673.1"/>
</dbReference>
<dbReference type="SMR" id="C4L299"/>
<dbReference type="STRING" id="360911.EAT1b_2229"/>
<dbReference type="KEGG" id="eat:EAT1b_2229"/>
<dbReference type="eggNOG" id="COG0046">
    <property type="taxonomic scope" value="Bacteria"/>
</dbReference>
<dbReference type="HOGENOM" id="CLU_003100_0_1_9"/>
<dbReference type="OrthoDB" id="9804441at2"/>
<dbReference type="UniPathway" id="UPA00074">
    <property type="reaction ID" value="UER00128"/>
</dbReference>
<dbReference type="Proteomes" id="UP000000716">
    <property type="component" value="Chromosome"/>
</dbReference>
<dbReference type="GO" id="GO:0005737">
    <property type="term" value="C:cytoplasm"/>
    <property type="evidence" value="ECO:0007669"/>
    <property type="project" value="UniProtKB-SubCell"/>
</dbReference>
<dbReference type="GO" id="GO:0005524">
    <property type="term" value="F:ATP binding"/>
    <property type="evidence" value="ECO:0007669"/>
    <property type="project" value="UniProtKB-UniRule"/>
</dbReference>
<dbReference type="GO" id="GO:0000287">
    <property type="term" value="F:magnesium ion binding"/>
    <property type="evidence" value="ECO:0007669"/>
    <property type="project" value="UniProtKB-UniRule"/>
</dbReference>
<dbReference type="GO" id="GO:0004642">
    <property type="term" value="F:phosphoribosylformylglycinamidine synthase activity"/>
    <property type="evidence" value="ECO:0007669"/>
    <property type="project" value="UniProtKB-UniRule"/>
</dbReference>
<dbReference type="GO" id="GO:0006189">
    <property type="term" value="P:'de novo' IMP biosynthetic process"/>
    <property type="evidence" value="ECO:0007669"/>
    <property type="project" value="UniProtKB-UniRule"/>
</dbReference>
<dbReference type="CDD" id="cd02203">
    <property type="entry name" value="PurL_repeat1"/>
    <property type="match status" value="1"/>
</dbReference>
<dbReference type="CDD" id="cd02204">
    <property type="entry name" value="PurL_repeat2"/>
    <property type="match status" value="1"/>
</dbReference>
<dbReference type="FunFam" id="3.30.1330.10:FF:000004">
    <property type="entry name" value="Phosphoribosylformylglycinamidine synthase subunit PurL"/>
    <property type="match status" value="1"/>
</dbReference>
<dbReference type="FunFam" id="3.90.650.10:FF:000009">
    <property type="entry name" value="Phosphoribosylformylglycinamidine synthase subunit PurL"/>
    <property type="match status" value="1"/>
</dbReference>
<dbReference type="Gene3D" id="3.90.650.10">
    <property type="entry name" value="PurM-like C-terminal domain"/>
    <property type="match status" value="2"/>
</dbReference>
<dbReference type="Gene3D" id="3.30.1330.10">
    <property type="entry name" value="PurM-like, N-terminal domain"/>
    <property type="match status" value="2"/>
</dbReference>
<dbReference type="HAMAP" id="MF_00420">
    <property type="entry name" value="PurL_2"/>
    <property type="match status" value="1"/>
</dbReference>
<dbReference type="InterPro" id="IPR010074">
    <property type="entry name" value="PRibForGlyAmidine_synth_PurL"/>
</dbReference>
<dbReference type="InterPro" id="IPR041609">
    <property type="entry name" value="PurL_linker"/>
</dbReference>
<dbReference type="InterPro" id="IPR010918">
    <property type="entry name" value="PurM-like_C_dom"/>
</dbReference>
<dbReference type="InterPro" id="IPR036676">
    <property type="entry name" value="PurM-like_C_sf"/>
</dbReference>
<dbReference type="InterPro" id="IPR016188">
    <property type="entry name" value="PurM-like_N"/>
</dbReference>
<dbReference type="InterPro" id="IPR036921">
    <property type="entry name" value="PurM-like_N_sf"/>
</dbReference>
<dbReference type="NCBIfam" id="TIGR01736">
    <property type="entry name" value="FGAM_synth_II"/>
    <property type="match status" value="1"/>
</dbReference>
<dbReference type="NCBIfam" id="NF002290">
    <property type="entry name" value="PRK01213.1"/>
    <property type="match status" value="1"/>
</dbReference>
<dbReference type="PANTHER" id="PTHR43555">
    <property type="entry name" value="PHOSPHORIBOSYLFORMYLGLYCINAMIDINE SYNTHASE SUBUNIT PURL"/>
    <property type="match status" value="1"/>
</dbReference>
<dbReference type="PANTHER" id="PTHR43555:SF1">
    <property type="entry name" value="PHOSPHORIBOSYLFORMYLGLYCINAMIDINE SYNTHASE SUBUNIT PURL"/>
    <property type="match status" value="1"/>
</dbReference>
<dbReference type="Pfam" id="PF00586">
    <property type="entry name" value="AIRS"/>
    <property type="match status" value="2"/>
</dbReference>
<dbReference type="Pfam" id="PF02769">
    <property type="entry name" value="AIRS_C"/>
    <property type="match status" value="2"/>
</dbReference>
<dbReference type="Pfam" id="PF18072">
    <property type="entry name" value="FGAR-AT_linker"/>
    <property type="match status" value="1"/>
</dbReference>
<dbReference type="PIRSF" id="PIRSF001587">
    <property type="entry name" value="FGAM_synthase_II"/>
    <property type="match status" value="1"/>
</dbReference>
<dbReference type="SUPFAM" id="SSF56042">
    <property type="entry name" value="PurM C-terminal domain-like"/>
    <property type="match status" value="2"/>
</dbReference>
<dbReference type="SUPFAM" id="SSF55326">
    <property type="entry name" value="PurM N-terminal domain-like"/>
    <property type="match status" value="2"/>
</dbReference>
<evidence type="ECO:0000255" key="1">
    <source>
        <dbReference type="HAMAP-Rule" id="MF_00420"/>
    </source>
</evidence>